<proteinExistence type="inferred from homology"/>
<gene>
    <name evidence="1" type="primary">dapB</name>
    <name type="ordered locus">XCC1840</name>
</gene>
<evidence type="ECO:0000255" key="1">
    <source>
        <dbReference type="HAMAP-Rule" id="MF_00102"/>
    </source>
</evidence>
<evidence type="ECO:0000305" key="2"/>
<keyword id="KW-0028">Amino-acid biosynthesis</keyword>
<keyword id="KW-0963">Cytoplasm</keyword>
<keyword id="KW-0220">Diaminopimelate biosynthesis</keyword>
<keyword id="KW-0457">Lysine biosynthesis</keyword>
<keyword id="KW-0520">NAD</keyword>
<keyword id="KW-0521">NADP</keyword>
<keyword id="KW-0560">Oxidoreductase</keyword>
<keyword id="KW-1185">Reference proteome</keyword>
<protein>
    <recommendedName>
        <fullName evidence="1">4-hydroxy-tetrahydrodipicolinate reductase</fullName>
        <shortName evidence="1">HTPA reductase</shortName>
        <ecNumber evidence="1">1.17.1.8</ecNumber>
    </recommendedName>
</protein>
<accession>Q8P9L3</accession>
<feature type="chain" id="PRO_0000141511" description="4-hydroxy-tetrahydrodipicolinate reductase">
    <location>
        <begin position="1"/>
        <end position="238"/>
    </location>
</feature>
<feature type="active site" description="Proton donor/acceptor" evidence="1">
    <location>
        <position position="149"/>
    </location>
</feature>
<feature type="active site" description="Proton donor" evidence="1">
    <location>
        <position position="153"/>
    </location>
</feature>
<feature type="binding site" evidence="1">
    <location>
        <begin position="12"/>
        <end position="17"/>
    </location>
    <ligand>
        <name>NAD(+)</name>
        <dbReference type="ChEBI" id="CHEBI:57540"/>
    </ligand>
</feature>
<feature type="binding site" evidence="1">
    <location>
        <position position="40"/>
    </location>
    <ligand>
        <name>NADP(+)</name>
        <dbReference type="ChEBI" id="CHEBI:58349"/>
    </ligand>
</feature>
<feature type="binding site" evidence="1">
    <location>
        <begin position="93"/>
        <end position="95"/>
    </location>
    <ligand>
        <name>NAD(+)</name>
        <dbReference type="ChEBI" id="CHEBI:57540"/>
    </ligand>
</feature>
<feature type="binding site" evidence="1">
    <location>
        <begin position="117"/>
        <end position="120"/>
    </location>
    <ligand>
        <name>NAD(+)</name>
        <dbReference type="ChEBI" id="CHEBI:57540"/>
    </ligand>
</feature>
<feature type="binding site" evidence="1">
    <location>
        <position position="150"/>
    </location>
    <ligand>
        <name>(S)-2,3,4,5-tetrahydrodipicolinate</name>
        <dbReference type="ChEBI" id="CHEBI:16845"/>
    </ligand>
</feature>
<feature type="binding site" evidence="1">
    <location>
        <begin position="159"/>
        <end position="160"/>
    </location>
    <ligand>
        <name>(S)-2,3,4,5-tetrahydrodipicolinate</name>
        <dbReference type="ChEBI" id="CHEBI:16845"/>
    </ligand>
</feature>
<comment type="function">
    <text evidence="1">Catalyzes the conversion of 4-hydroxy-tetrahydrodipicolinate (HTPA) to tetrahydrodipicolinate.</text>
</comment>
<comment type="catalytic activity">
    <reaction evidence="1">
        <text>(S)-2,3,4,5-tetrahydrodipicolinate + NAD(+) + H2O = (2S,4S)-4-hydroxy-2,3,4,5-tetrahydrodipicolinate + NADH + H(+)</text>
        <dbReference type="Rhea" id="RHEA:35323"/>
        <dbReference type="ChEBI" id="CHEBI:15377"/>
        <dbReference type="ChEBI" id="CHEBI:15378"/>
        <dbReference type="ChEBI" id="CHEBI:16845"/>
        <dbReference type="ChEBI" id="CHEBI:57540"/>
        <dbReference type="ChEBI" id="CHEBI:57945"/>
        <dbReference type="ChEBI" id="CHEBI:67139"/>
        <dbReference type="EC" id="1.17.1.8"/>
    </reaction>
</comment>
<comment type="catalytic activity">
    <reaction evidence="1">
        <text>(S)-2,3,4,5-tetrahydrodipicolinate + NADP(+) + H2O = (2S,4S)-4-hydroxy-2,3,4,5-tetrahydrodipicolinate + NADPH + H(+)</text>
        <dbReference type="Rhea" id="RHEA:35331"/>
        <dbReference type="ChEBI" id="CHEBI:15377"/>
        <dbReference type="ChEBI" id="CHEBI:15378"/>
        <dbReference type="ChEBI" id="CHEBI:16845"/>
        <dbReference type="ChEBI" id="CHEBI:57783"/>
        <dbReference type="ChEBI" id="CHEBI:58349"/>
        <dbReference type="ChEBI" id="CHEBI:67139"/>
        <dbReference type="EC" id="1.17.1.8"/>
    </reaction>
</comment>
<comment type="pathway">
    <text evidence="1">Amino-acid biosynthesis; L-lysine biosynthesis via DAP pathway; (S)-tetrahydrodipicolinate from L-aspartate: step 4/4.</text>
</comment>
<comment type="subcellular location">
    <subcellularLocation>
        <location evidence="1">Cytoplasm</location>
    </subcellularLocation>
</comment>
<comment type="similarity">
    <text evidence="1">Belongs to the DapB family.</text>
</comment>
<comment type="caution">
    <text evidence="2">Was originally thought to be a dihydrodipicolinate reductase (DHDPR), catalyzing the conversion of dihydrodipicolinate to tetrahydrodipicolinate. However, it was shown in E.coli that the substrate of the enzymatic reaction is not dihydrodipicolinate (DHDP) but in fact (2S,4S)-4-hydroxy-2,3,4,5-tetrahydrodipicolinic acid (HTPA), the product released by the DapA-catalyzed reaction.</text>
</comment>
<organism>
    <name type="scientific">Xanthomonas campestris pv. campestris (strain ATCC 33913 / DSM 3586 / NCPPB 528 / LMG 568 / P 25)</name>
    <dbReference type="NCBI Taxonomy" id="190485"/>
    <lineage>
        <taxon>Bacteria</taxon>
        <taxon>Pseudomonadati</taxon>
        <taxon>Pseudomonadota</taxon>
        <taxon>Gammaproteobacteria</taxon>
        <taxon>Lysobacterales</taxon>
        <taxon>Lysobacteraceae</taxon>
        <taxon>Xanthomonas</taxon>
    </lineage>
</organism>
<dbReference type="EC" id="1.17.1.8" evidence="1"/>
<dbReference type="EMBL" id="AE008922">
    <property type="protein sequence ID" value="AAM41129.1"/>
    <property type="molecule type" value="Genomic_DNA"/>
</dbReference>
<dbReference type="RefSeq" id="NP_637205.1">
    <property type="nucleotide sequence ID" value="NC_003902.1"/>
</dbReference>
<dbReference type="RefSeq" id="WP_011037010.1">
    <property type="nucleotide sequence ID" value="NC_003902.1"/>
</dbReference>
<dbReference type="SMR" id="Q8P9L3"/>
<dbReference type="STRING" id="190485.XCC1840"/>
<dbReference type="EnsemblBacteria" id="AAM41129">
    <property type="protein sequence ID" value="AAM41129"/>
    <property type="gene ID" value="XCC1840"/>
</dbReference>
<dbReference type="GeneID" id="58013611"/>
<dbReference type="KEGG" id="xcc:XCC1840"/>
<dbReference type="PATRIC" id="fig|190485.4.peg.1964"/>
<dbReference type="eggNOG" id="COG0289">
    <property type="taxonomic scope" value="Bacteria"/>
</dbReference>
<dbReference type="HOGENOM" id="CLU_047479_2_2_6"/>
<dbReference type="OrthoDB" id="9790352at2"/>
<dbReference type="UniPathway" id="UPA00034">
    <property type="reaction ID" value="UER00018"/>
</dbReference>
<dbReference type="Proteomes" id="UP000001010">
    <property type="component" value="Chromosome"/>
</dbReference>
<dbReference type="GO" id="GO:0005829">
    <property type="term" value="C:cytosol"/>
    <property type="evidence" value="ECO:0000318"/>
    <property type="project" value="GO_Central"/>
</dbReference>
<dbReference type="GO" id="GO:0008839">
    <property type="term" value="F:4-hydroxy-tetrahydrodipicolinate reductase"/>
    <property type="evidence" value="ECO:0000318"/>
    <property type="project" value="GO_Central"/>
</dbReference>
<dbReference type="GO" id="GO:0051287">
    <property type="term" value="F:NAD binding"/>
    <property type="evidence" value="ECO:0007669"/>
    <property type="project" value="UniProtKB-UniRule"/>
</dbReference>
<dbReference type="GO" id="GO:0050661">
    <property type="term" value="F:NADP binding"/>
    <property type="evidence" value="ECO:0007669"/>
    <property type="project" value="UniProtKB-UniRule"/>
</dbReference>
<dbReference type="GO" id="GO:0016726">
    <property type="term" value="F:oxidoreductase activity, acting on CH or CH2 groups, NAD or NADP as acceptor"/>
    <property type="evidence" value="ECO:0007669"/>
    <property type="project" value="UniProtKB-UniRule"/>
</dbReference>
<dbReference type="GO" id="GO:0019877">
    <property type="term" value="P:diaminopimelate biosynthetic process"/>
    <property type="evidence" value="ECO:0000318"/>
    <property type="project" value="GO_Central"/>
</dbReference>
<dbReference type="GO" id="GO:0009089">
    <property type="term" value="P:lysine biosynthetic process via diaminopimelate"/>
    <property type="evidence" value="ECO:0007669"/>
    <property type="project" value="UniProtKB-UniRule"/>
</dbReference>
<dbReference type="CDD" id="cd02274">
    <property type="entry name" value="DHDPR_N"/>
    <property type="match status" value="1"/>
</dbReference>
<dbReference type="Gene3D" id="3.30.360.10">
    <property type="entry name" value="Dihydrodipicolinate Reductase, domain 2"/>
    <property type="match status" value="1"/>
</dbReference>
<dbReference type="Gene3D" id="3.40.50.720">
    <property type="entry name" value="NAD(P)-binding Rossmann-like Domain"/>
    <property type="match status" value="1"/>
</dbReference>
<dbReference type="HAMAP" id="MF_00102">
    <property type="entry name" value="DapB"/>
    <property type="match status" value="1"/>
</dbReference>
<dbReference type="InterPro" id="IPR022663">
    <property type="entry name" value="DapB_C"/>
</dbReference>
<dbReference type="InterPro" id="IPR000846">
    <property type="entry name" value="DapB_N"/>
</dbReference>
<dbReference type="InterPro" id="IPR022664">
    <property type="entry name" value="DapB_N_CS"/>
</dbReference>
<dbReference type="InterPro" id="IPR023940">
    <property type="entry name" value="DHDPR_bac"/>
</dbReference>
<dbReference type="InterPro" id="IPR036291">
    <property type="entry name" value="NAD(P)-bd_dom_sf"/>
</dbReference>
<dbReference type="NCBIfam" id="TIGR00036">
    <property type="entry name" value="dapB"/>
    <property type="match status" value="1"/>
</dbReference>
<dbReference type="PANTHER" id="PTHR20836:SF0">
    <property type="entry name" value="4-HYDROXY-TETRAHYDRODIPICOLINATE REDUCTASE 1, CHLOROPLASTIC-RELATED"/>
    <property type="match status" value="1"/>
</dbReference>
<dbReference type="PANTHER" id="PTHR20836">
    <property type="entry name" value="DIHYDRODIPICOLINATE REDUCTASE"/>
    <property type="match status" value="1"/>
</dbReference>
<dbReference type="Pfam" id="PF05173">
    <property type="entry name" value="DapB_C"/>
    <property type="match status" value="1"/>
</dbReference>
<dbReference type="Pfam" id="PF01113">
    <property type="entry name" value="DapB_N"/>
    <property type="match status" value="1"/>
</dbReference>
<dbReference type="PIRSF" id="PIRSF000161">
    <property type="entry name" value="DHPR"/>
    <property type="match status" value="1"/>
</dbReference>
<dbReference type="SUPFAM" id="SSF55347">
    <property type="entry name" value="Glyceraldehyde-3-phosphate dehydrogenase-like, C-terminal domain"/>
    <property type="match status" value="1"/>
</dbReference>
<dbReference type="SUPFAM" id="SSF51735">
    <property type="entry name" value="NAD(P)-binding Rossmann-fold domains"/>
    <property type="match status" value="1"/>
</dbReference>
<dbReference type="PROSITE" id="PS01298">
    <property type="entry name" value="DAPB"/>
    <property type="match status" value="1"/>
</dbReference>
<name>DAPB_XANCP</name>
<reference key="1">
    <citation type="journal article" date="2002" name="Nature">
        <title>Comparison of the genomes of two Xanthomonas pathogens with differing host specificities.</title>
        <authorList>
            <person name="da Silva A.C.R."/>
            <person name="Ferro J.A."/>
            <person name="Reinach F.C."/>
            <person name="Farah C.S."/>
            <person name="Furlan L.R."/>
            <person name="Quaggio R.B."/>
            <person name="Monteiro-Vitorello C.B."/>
            <person name="Van Sluys M.A."/>
            <person name="Almeida N.F. Jr."/>
            <person name="Alves L.M.C."/>
            <person name="do Amaral A.M."/>
            <person name="Bertolini M.C."/>
            <person name="Camargo L.E.A."/>
            <person name="Camarotte G."/>
            <person name="Cannavan F."/>
            <person name="Cardozo J."/>
            <person name="Chambergo F."/>
            <person name="Ciapina L.P."/>
            <person name="Cicarelli R.M.B."/>
            <person name="Coutinho L.L."/>
            <person name="Cursino-Santos J.R."/>
            <person name="El-Dorry H."/>
            <person name="Faria J.B."/>
            <person name="Ferreira A.J.S."/>
            <person name="Ferreira R.C.C."/>
            <person name="Ferro M.I.T."/>
            <person name="Formighieri E.F."/>
            <person name="Franco M.C."/>
            <person name="Greggio C.C."/>
            <person name="Gruber A."/>
            <person name="Katsuyama A.M."/>
            <person name="Kishi L.T."/>
            <person name="Leite R.P."/>
            <person name="Lemos E.G.M."/>
            <person name="Lemos M.V.F."/>
            <person name="Locali E.C."/>
            <person name="Machado M.A."/>
            <person name="Madeira A.M.B.N."/>
            <person name="Martinez-Rossi N.M."/>
            <person name="Martins E.C."/>
            <person name="Meidanis J."/>
            <person name="Menck C.F.M."/>
            <person name="Miyaki C.Y."/>
            <person name="Moon D.H."/>
            <person name="Moreira L.M."/>
            <person name="Novo M.T.M."/>
            <person name="Okura V.K."/>
            <person name="Oliveira M.C."/>
            <person name="Oliveira V.R."/>
            <person name="Pereira H.A."/>
            <person name="Rossi A."/>
            <person name="Sena J.A.D."/>
            <person name="Silva C."/>
            <person name="de Souza R.F."/>
            <person name="Spinola L.A.F."/>
            <person name="Takita M.A."/>
            <person name="Tamura R.E."/>
            <person name="Teixeira E.C."/>
            <person name="Tezza R.I.D."/>
            <person name="Trindade dos Santos M."/>
            <person name="Truffi D."/>
            <person name="Tsai S.M."/>
            <person name="White F.F."/>
            <person name="Setubal J.C."/>
            <person name="Kitajima J.P."/>
        </authorList>
    </citation>
    <scope>NUCLEOTIDE SEQUENCE [LARGE SCALE GENOMIC DNA]</scope>
    <source>
        <strain>ATCC 33913 / DSM 3586 / NCPPB 528 / LMG 568 / P 25</strain>
    </source>
</reference>
<sequence length="238" mass="24756">MTTSPVKVLIHGASGRMGKALLRLAAEDDALHVVGAVVGRSPSQRVVDGVPYFAANELGGAPAFDVAIDFSLPQGFAPILALCVQRGKPLVSGTTGLDEAQRAGLLQAAGQIPLVWASNFSLGVAVLTELVERAAGSLPGWDCDIIEAHHVHKQDAPSGTALTLGEAATGSGAQPRFASVRAGDIVGEHSVQFTGLGERVELIHRATNRDIFARGALHAAKRLLGKPPGSYRVRDLVL</sequence>